<organism>
    <name type="scientific">Erwinia tasmaniensis (strain DSM 17950 / CFBP 7177 / CIP 109463 / NCPPB 4357 / Et1/99)</name>
    <dbReference type="NCBI Taxonomy" id="465817"/>
    <lineage>
        <taxon>Bacteria</taxon>
        <taxon>Pseudomonadati</taxon>
        <taxon>Pseudomonadota</taxon>
        <taxon>Gammaproteobacteria</taxon>
        <taxon>Enterobacterales</taxon>
        <taxon>Erwiniaceae</taxon>
        <taxon>Erwinia</taxon>
    </lineage>
</organism>
<proteinExistence type="inferred from homology"/>
<gene>
    <name evidence="1" type="primary">serS</name>
    <name type="ordered locus">ETA_21510</name>
</gene>
<feature type="chain" id="PRO_1000098067" description="Serine--tRNA ligase">
    <location>
        <begin position="1"/>
        <end position="430"/>
    </location>
</feature>
<feature type="region of interest" description="Disordered" evidence="2">
    <location>
        <begin position="45"/>
        <end position="65"/>
    </location>
</feature>
<feature type="compositionally biased region" description="Polar residues" evidence="2">
    <location>
        <begin position="45"/>
        <end position="58"/>
    </location>
</feature>
<feature type="binding site" evidence="1">
    <location>
        <begin position="237"/>
        <end position="239"/>
    </location>
    <ligand>
        <name>L-serine</name>
        <dbReference type="ChEBI" id="CHEBI:33384"/>
    </ligand>
</feature>
<feature type="binding site" evidence="1">
    <location>
        <begin position="268"/>
        <end position="270"/>
    </location>
    <ligand>
        <name>ATP</name>
        <dbReference type="ChEBI" id="CHEBI:30616"/>
    </ligand>
</feature>
<feature type="binding site" evidence="1">
    <location>
        <position position="291"/>
    </location>
    <ligand>
        <name>L-serine</name>
        <dbReference type="ChEBI" id="CHEBI:33384"/>
    </ligand>
</feature>
<feature type="binding site" evidence="1">
    <location>
        <begin position="355"/>
        <end position="358"/>
    </location>
    <ligand>
        <name>ATP</name>
        <dbReference type="ChEBI" id="CHEBI:30616"/>
    </ligand>
</feature>
<feature type="binding site" evidence="1">
    <location>
        <position position="391"/>
    </location>
    <ligand>
        <name>L-serine</name>
        <dbReference type="ChEBI" id="CHEBI:33384"/>
    </ligand>
</feature>
<comment type="function">
    <text evidence="1">Catalyzes the attachment of serine to tRNA(Ser). Is also able to aminoacylate tRNA(Sec) with serine, to form the misacylated tRNA L-seryl-tRNA(Sec), which will be further converted into selenocysteinyl-tRNA(Sec).</text>
</comment>
<comment type="catalytic activity">
    <reaction evidence="1">
        <text>tRNA(Ser) + L-serine + ATP = L-seryl-tRNA(Ser) + AMP + diphosphate + H(+)</text>
        <dbReference type="Rhea" id="RHEA:12292"/>
        <dbReference type="Rhea" id="RHEA-COMP:9669"/>
        <dbReference type="Rhea" id="RHEA-COMP:9703"/>
        <dbReference type="ChEBI" id="CHEBI:15378"/>
        <dbReference type="ChEBI" id="CHEBI:30616"/>
        <dbReference type="ChEBI" id="CHEBI:33019"/>
        <dbReference type="ChEBI" id="CHEBI:33384"/>
        <dbReference type="ChEBI" id="CHEBI:78442"/>
        <dbReference type="ChEBI" id="CHEBI:78533"/>
        <dbReference type="ChEBI" id="CHEBI:456215"/>
        <dbReference type="EC" id="6.1.1.11"/>
    </reaction>
</comment>
<comment type="catalytic activity">
    <reaction evidence="1">
        <text>tRNA(Sec) + L-serine + ATP = L-seryl-tRNA(Sec) + AMP + diphosphate + H(+)</text>
        <dbReference type="Rhea" id="RHEA:42580"/>
        <dbReference type="Rhea" id="RHEA-COMP:9742"/>
        <dbReference type="Rhea" id="RHEA-COMP:10128"/>
        <dbReference type="ChEBI" id="CHEBI:15378"/>
        <dbReference type="ChEBI" id="CHEBI:30616"/>
        <dbReference type="ChEBI" id="CHEBI:33019"/>
        <dbReference type="ChEBI" id="CHEBI:33384"/>
        <dbReference type="ChEBI" id="CHEBI:78442"/>
        <dbReference type="ChEBI" id="CHEBI:78533"/>
        <dbReference type="ChEBI" id="CHEBI:456215"/>
        <dbReference type="EC" id="6.1.1.11"/>
    </reaction>
</comment>
<comment type="pathway">
    <text evidence="1">Aminoacyl-tRNA biosynthesis; selenocysteinyl-tRNA(Sec) biosynthesis; L-seryl-tRNA(Sec) from L-serine and tRNA(Sec): step 1/1.</text>
</comment>
<comment type="subunit">
    <text evidence="1">Homodimer. The tRNA molecule binds across the dimer.</text>
</comment>
<comment type="subcellular location">
    <subcellularLocation>
        <location evidence="1">Cytoplasm</location>
    </subcellularLocation>
</comment>
<comment type="domain">
    <text evidence="1">Consists of two distinct domains, a catalytic core and a N-terminal extension that is involved in tRNA binding.</text>
</comment>
<comment type="similarity">
    <text evidence="1">Belongs to the class-II aminoacyl-tRNA synthetase family. Type-1 seryl-tRNA synthetase subfamily.</text>
</comment>
<dbReference type="EC" id="6.1.1.11" evidence="1"/>
<dbReference type="EMBL" id="CU468135">
    <property type="protein sequence ID" value="CAO97197.1"/>
    <property type="molecule type" value="Genomic_DNA"/>
</dbReference>
<dbReference type="RefSeq" id="WP_012441868.1">
    <property type="nucleotide sequence ID" value="NC_010694.1"/>
</dbReference>
<dbReference type="SMR" id="B2VC55"/>
<dbReference type="STRING" id="465817.ETA_21510"/>
<dbReference type="KEGG" id="eta:ETA_21510"/>
<dbReference type="eggNOG" id="COG0172">
    <property type="taxonomic scope" value="Bacteria"/>
</dbReference>
<dbReference type="HOGENOM" id="CLU_023797_1_1_6"/>
<dbReference type="OrthoDB" id="9804647at2"/>
<dbReference type="UniPathway" id="UPA00906">
    <property type="reaction ID" value="UER00895"/>
</dbReference>
<dbReference type="Proteomes" id="UP000001726">
    <property type="component" value="Chromosome"/>
</dbReference>
<dbReference type="GO" id="GO:0005737">
    <property type="term" value="C:cytoplasm"/>
    <property type="evidence" value="ECO:0007669"/>
    <property type="project" value="UniProtKB-SubCell"/>
</dbReference>
<dbReference type="GO" id="GO:0005524">
    <property type="term" value="F:ATP binding"/>
    <property type="evidence" value="ECO:0007669"/>
    <property type="project" value="UniProtKB-UniRule"/>
</dbReference>
<dbReference type="GO" id="GO:0004828">
    <property type="term" value="F:serine-tRNA ligase activity"/>
    <property type="evidence" value="ECO:0007669"/>
    <property type="project" value="UniProtKB-UniRule"/>
</dbReference>
<dbReference type="GO" id="GO:0016260">
    <property type="term" value="P:selenocysteine biosynthetic process"/>
    <property type="evidence" value="ECO:0007669"/>
    <property type="project" value="UniProtKB-UniRule"/>
</dbReference>
<dbReference type="GO" id="GO:0006434">
    <property type="term" value="P:seryl-tRNA aminoacylation"/>
    <property type="evidence" value="ECO:0007669"/>
    <property type="project" value="UniProtKB-UniRule"/>
</dbReference>
<dbReference type="CDD" id="cd00770">
    <property type="entry name" value="SerRS_core"/>
    <property type="match status" value="1"/>
</dbReference>
<dbReference type="FunFam" id="1.10.287.40:FF:000001">
    <property type="entry name" value="Serine--tRNA ligase"/>
    <property type="match status" value="1"/>
</dbReference>
<dbReference type="FunFam" id="3.30.930.10:FF:000018">
    <property type="entry name" value="Serine--tRNA ligase"/>
    <property type="match status" value="1"/>
</dbReference>
<dbReference type="Gene3D" id="3.30.930.10">
    <property type="entry name" value="Bira Bifunctional Protein, Domain 2"/>
    <property type="match status" value="1"/>
</dbReference>
<dbReference type="Gene3D" id="1.10.287.40">
    <property type="entry name" value="Serine-tRNA synthetase, tRNA binding domain"/>
    <property type="match status" value="1"/>
</dbReference>
<dbReference type="HAMAP" id="MF_00176">
    <property type="entry name" value="Ser_tRNA_synth_type1"/>
    <property type="match status" value="1"/>
</dbReference>
<dbReference type="InterPro" id="IPR002314">
    <property type="entry name" value="aa-tRNA-synt_IIb"/>
</dbReference>
<dbReference type="InterPro" id="IPR006195">
    <property type="entry name" value="aa-tRNA-synth_II"/>
</dbReference>
<dbReference type="InterPro" id="IPR045864">
    <property type="entry name" value="aa-tRNA-synth_II/BPL/LPL"/>
</dbReference>
<dbReference type="InterPro" id="IPR002317">
    <property type="entry name" value="Ser-tRNA-ligase_type_1"/>
</dbReference>
<dbReference type="InterPro" id="IPR015866">
    <property type="entry name" value="Ser-tRNA-synth_1_N"/>
</dbReference>
<dbReference type="InterPro" id="IPR042103">
    <property type="entry name" value="SerRS_1_N_sf"/>
</dbReference>
<dbReference type="InterPro" id="IPR033729">
    <property type="entry name" value="SerRS_core"/>
</dbReference>
<dbReference type="InterPro" id="IPR010978">
    <property type="entry name" value="tRNA-bd_arm"/>
</dbReference>
<dbReference type="NCBIfam" id="TIGR00414">
    <property type="entry name" value="serS"/>
    <property type="match status" value="1"/>
</dbReference>
<dbReference type="PANTHER" id="PTHR43697:SF1">
    <property type="entry name" value="SERINE--TRNA LIGASE"/>
    <property type="match status" value="1"/>
</dbReference>
<dbReference type="PANTHER" id="PTHR43697">
    <property type="entry name" value="SERYL-TRNA SYNTHETASE"/>
    <property type="match status" value="1"/>
</dbReference>
<dbReference type="Pfam" id="PF02403">
    <property type="entry name" value="Seryl_tRNA_N"/>
    <property type="match status" value="1"/>
</dbReference>
<dbReference type="Pfam" id="PF00587">
    <property type="entry name" value="tRNA-synt_2b"/>
    <property type="match status" value="1"/>
</dbReference>
<dbReference type="PIRSF" id="PIRSF001529">
    <property type="entry name" value="Ser-tRNA-synth_IIa"/>
    <property type="match status" value="1"/>
</dbReference>
<dbReference type="PRINTS" id="PR00981">
    <property type="entry name" value="TRNASYNTHSER"/>
</dbReference>
<dbReference type="SUPFAM" id="SSF55681">
    <property type="entry name" value="Class II aaRS and biotin synthetases"/>
    <property type="match status" value="1"/>
</dbReference>
<dbReference type="SUPFAM" id="SSF46589">
    <property type="entry name" value="tRNA-binding arm"/>
    <property type="match status" value="1"/>
</dbReference>
<dbReference type="PROSITE" id="PS50862">
    <property type="entry name" value="AA_TRNA_LIGASE_II"/>
    <property type="match status" value="1"/>
</dbReference>
<protein>
    <recommendedName>
        <fullName evidence="1">Serine--tRNA ligase</fullName>
        <ecNumber evidence="1">6.1.1.11</ecNumber>
    </recommendedName>
    <alternativeName>
        <fullName evidence="1">Seryl-tRNA synthetase</fullName>
        <shortName evidence="1">SerRS</shortName>
    </alternativeName>
    <alternativeName>
        <fullName evidence="1">Seryl-tRNA(Ser/Sec) synthetase</fullName>
    </alternativeName>
</protein>
<reference key="1">
    <citation type="journal article" date="2008" name="Environ. Microbiol.">
        <title>The genome of Erwinia tasmaniensis strain Et1/99, a non-pathogenic bacterium in the genus Erwinia.</title>
        <authorList>
            <person name="Kube M."/>
            <person name="Migdoll A.M."/>
            <person name="Mueller I."/>
            <person name="Kuhl H."/>
            <person name="Beck A."/>
            <person name="Reinhardt R."/>
            <person name="Geider K."/>
        </authorList>
    </citation>
    <scope>NUCLEOTIDE SEQUENCE [LARGE SCALE GENOMIC DNA]</scope>
    <source>
        <strain>DSM 17950 / CFBP 7177 / CIP 109463 / NCPPB 4357 / Et1/99</strain>
    </source>
</reference>
<evidence type="ECO:0000255" key="1">
    <source>
        <dbReference type="HAMAP-Rule" id="MF_00176"/>
    </source>
</evidence>
<evidence type="ECO:0000256" key="2">
    <source>
        <dbReference type="SAM" id="MobiDB-lite"/>
    </source>
</evidence>
<keyword id="KW-0030">Aminoacyl-tRNA synthetase</keyword>
<keyword id="KW-0067">ATP-binding</keyword>
<keyword id="KW-0963">Cytoplasm</keyword>
<keyword id="KW-0436">Ligase</keyword>
<keyword id="KW-0547">Nucleotide-binding</keyword>
<keyword id="KW-0648">Protein biosynthesis</keyword>
<keyword id="KW-1185">Reference proteome</keyword>
<accession>B2VC55</accession>
<sequence length="430" mass="48442">MLDPNLLRNEPDAVAEKLARRGYKLDVDTLRAHEERRKVLQVETENLQAERNSRSKSIGQAKARGEDIEPLRQEVNALGERLDAAKAELDALLTCINDFSMAIPNIPADVVPLGKDDSENQEISRWGEPRQFDFTVRDHVELGEMAAGLDFAAAVKLTGSRFIVMKGQIALMHRALSQFMLDLHTEQHGYQETYVPYLVNHASLYGTGQLPKFGEDLFHTRPLDEEASSSNYALIPTSEVPLTNLVRDEILEEETLPLKMTAHTPCFRSEAGAYGRDTRGLIRMHQFDKVEMVHITRPEDSMDALEELVGHAEKVLQLLNLPYRKVLLCTGDMGFGAQKTYDLEVWLPAQDTYREISSCSNMGDFQARRMKARCRPRGESKTRLVHTLNGSGLAVGRTLVAVLENYQQADGRIEVPEVLRPYMKGLHFIG</sequence>
<name>SYS_ERWT9</name>